<keyword id="KW-0997">Cell inner membrane</keyword>
<keyword id="KW-1003">Cell membrane</keyword>
<keyword id="KW-0472">Membrane</keyword>
<keyword id="KW-0812">Transmembrane</keyword>
<keyword id="KW-1133">Transmembrane helix</keyword>
<proteinExistence type="inferred from homology"/>
<name>YCIB_YERPG</name>
<sequence>MKQLLDFLPLVVFFIFYKMYDIFVASGALIVATLVALAFTWLKYRKVEKMTLVTAAMVLVFGTLTLAFHSDLFIKWKVTVLYVLFALALLVSQWVMKKPLIQRMLGKELTLPDKVWSTLNLSWAIFFLVCGLLNIYVAFWLPQDIWVNFKVFGLTALTLIFTLISGVYIYRHMPEEQKKS</sequence>
<organism>
    <name type="scientific">Yersinia pestis bv. Antiqua (strain Angola)</name>
    <dbReference type="NCBI Taxonomy" id="349746"/>
    <lineage>
        <taxon>Bacteria</taxon>
        <taxon>Pseudomonadati</taxon>
        <taxon>Pseudomonadota</taxon>
        <taxon>Gammaproteobacteria</taxon>
        <taxon>Enterobacterales</taxon>
        <taxon>Yersiniaceae</taxon>
        <taxon>Yersinia</taxon>
    </lineage>
</organism>
<protein>
    <recommendedName>
        <fullName evidence="1">Inner membrane-spanning protein YciB</fullName>
    </recommendedName>
</protein>
<evidence type="ECO:0000255" key="1">
    <source>
        <dbReference type="HAMAP-Rule" id="MF_00189"/>
    </source>
</evidence>
<reference key="1">
    <citation type="journal article" date="2010" name="J. Bacteriol.">
        <title>Genome sequence of the deep-rooted Yersinia pestis strain Angola reveals new insights into the evolution and pangenome of the plague bacterium.</title>
        <authorList>
            <person name="Eppinger M."/>
            <person name="Worsham P.L."/>
            <person name="Nikolich M.P."/>
            <person name="Riley D.R."/>
            <person name="Sebastian Y."/>
            <person name="Mou S."/>
            <person name="Achtman M."/>
            <person name="Lindler L.E."/>
            <person name="Ravel J."/>
        </authorList>
    </citation>
    <scope>NUCLEOTIDE SEQUENCE [LARGE SCALE GENOMIC DNA]</scope>
    <source>
        <strain>Angola</strain>
    </source>
</reference>
<feature type="chain" id="PRO_1000098902" description="Inner membrane-spanning protein YciB">
    <location>
        <begin position="1"/>
        <end position="180"/>
    </location>
</feature>
<feature type="transmembrane region" description="Helical" evidence="1">
    <location>
        <begin position="22"/>
        <end position="42"/>
    </location>
</feature>
<feature type="transmembrane region" description="Helical" evidence="1">
    <location>
        <begin position="50"/>
        <end position="70"/>
    </location>
</feature>
<feature type="transmembrane region" description="Helical" evidence="1">
    <location>
        <begin position="72"/>
        <end position="92"/>
    </location>
</feature>
<feature type="transmembrane region" description="Helical" evidence="1">
    <location>
        <begin position="121"/>
        <end position="141"/>
    </location>
</feature>
<feature type="transmembrane region" description="Helical" evidence="1">
    <location>
        <begin position="149"/>
        <end position="169"/>
    </location>
</feature>
<accession>A9R9A2</accession>
<comment type="function">
    <text evidence="1">Plays a role in cell envelope biogenesis, maintenance of cell envelope integrity and membrane homeostasis.</text>
</comment>
<comment type="subcellular location">
    <subcellularLocation>
        <location evidence="1">Cell inner membrane</location>
        <topology evidence="1">Multi-pass membrane protein</topology>
    </subcellularLocation>
</comment>
<comment type="similarity">
    <text evidence="1">Belongs to the YciB family.</text>
</comment>
<dbReference type="EMBL" id="CP000901">
    <property type="protein sequence ID" value="ABX87887.1"/>
    <property type="molecule type" value="Genomic_DNA"/>
</dbReference>
<dbReference type="RefSeq" id="WP_002210640.1">
    <property type="nucleotide sequence ID" value="NZ_CP009935.1"/>
</dbReference>
<dbReference type="KEGG" id="ypg:YpAngola_A2326"/>
<dbReference type="PATRIC" id="fig|349746.12.peg.3338"/>
<dbReference type="GO" id="GO:0005886">
    <property type="term" value="C:plasma membrane"/>
    <property type="evidence" value="ECO:0007669"/>
    <property type="project" value="UniProtKB-SubCell"/>
</dbReference>
<dbReference type="HAMAP" id="MF_00189">
    <property type="entry name" value="YciB"/>
    <property type="match status" value="1"/>
</dbReference>
<dbReference type="InterPro" id="IPR006008">
    <property type="entry name" value="YciB"/>
</dbReference>
<dbReference type="NCBIfam" id="TIGR00997">
    <property type="entry name" value="ispZ"/>
    <property type="match status" value="1"/>
</dbReference>
<dbReference type="NCBIfam" id="NF001324">
    <property type="entry name" value="PRK00259.1-2"/>
    <property type="match status" value="1"/>
</dbReference>
<dbReference type="NCBIfam" id="NF001325">
    <property type="entry name" value="PRK00259.1-3"/>
    <property type="match status" value="1"/>
</dbReference>
<dbReference type="NCBIfam" id="NF001326">
    <property type="entry name" value="PRK00259.1-4"/>
    <property type="match status" value="1"/>
</dbReference>
<dbReference type="PANTHER" id="PTHR36917:SF1">
    <property type="entry name" value="INNER MEMBRANE-SPANNING PROTEIN YCIB"/>
    <property type="match status" value="1"/>
</dbReference>
<dbReference type="PANTHER" id="PTHR36917">
    <property type="entry name" value="INTRACELLULAR SEPTATION PROTEIN A-RELATED"/>
    <property type="match status" value="1"/>
</dbReference>
<dbReference type="Pfam" id="PF04279">
    <property type="entry name" value="IspA"/>
    <property type="match status" value="1"/>
</dbReference>
<gene>
    <name evidence="1" type="primary">yciB</name>
    <name type="ordered locus">YpAngola_A2326</name>
</gene>